<reference key="1">
    <citation type="journal article" date="2005" name="Science">
        <title>The transcriptional landscape of the mammalian genome.</title>
        <authorList>
            <person name="Carninci P."/>
            <person name="Kasukawa T."/>
            <person name="Katayama S."/>
            <person name="Gough J."/>
            <person name="Frith M.C."/>
            <person name="Maeda N."/>
            <person name="Oyama R."/>
            <person name="Ravasi T."/>
            <person name="Lenhard B."/>
            <person name="Wells C."/>
            <person name="Kodzius R."/>
            <person name="Shimokawa K."/>
            <person name="Bajic V.B."/>
            <person name="Brenner S.E."/>
            <person name="Batalov S."/>
            <person name="Forrest A.R."/>
            <person name="Zavolan M."/>
            <person name="Davis M.J."/>
            <person name="Wilming L.G."/>
            <person name="Aidinis V."/>
            <person name="Allen J.E."/>
            <person name="Ambesi-Impiombato A."/>
            <person name="Apweiler R."/>
            <person name="Aturaliya R.N."/>
            <person name="Bailey T.L."/>
            <person name="Bansal M."/>
            <person name="Baxter L."/>
            <person name="Beisel K.W."/>
            <person name="Bersano T."/>
            <person name="Bono H."/>
            <person name="Chalk A.M."/>
            <person name="Chiu K.P."/>
            <person name="Choudhary V."/>
            <person name="Christoffels A."/>
            <person name="Clutterbuck D.R."/>
            <person name="Crowe M.L."/>
            <person name="Dalla E."/>
            <person name="Dalrymple B.P."/>
            <person name="de Bono B."/>
            <person name="Della Gatta G."/>
            <person name="di Bernardo D."/>
            <person name="Down T."/>
            <person name="Engstrom P."/>
            <person name="Fagiolini M."/>
            <person name="Faulkner G."/>
            <person name="Fletcher C.F."/>
            <person name="Fukushima T."/>
            <person name="Furuno M."/>
            <person name="Futaki S."/>
            <person name="Gariboldi M."/>
            <person name="Georgii-Hemming P."/>
            <person name="Gingeras T.R."/>
            <person name="Gojobori T."/>
            <person name="Green R.E."/>
            <person name="Gustincich S."/>
            <person name="Harbers M."/>
            <person name="Hayashi Y."/>
            <person name="Hensch T.K."/>
            <person name="Hirokawa N."/>
            <person name="Hill D."/>
            <person name="Huminiecki L."/>
            <person name="Iacono M."/>
            <person name="Ikeo K."/>
            <person name="Iwama A."/>
            <person name="Ishikawa T."/>
            <person name="Jakt M."/>
            <person name="Kanapin A."/>
            <person name="Katoh M."/>
            <person name="Kawasawa Y."/>
            <person name="Kelso J."/>
            <person name="Kitamura H."/>
            <person name="Kitano H."/>
            <person name="Kollias G."/>
            <person name="Krishnan S.P."/>
            <person name="Kruger A."/>
            <person name="Kummerfeld S.K."/>
            <person name="Kurochkin I.V."/>
            <person name="Lareau L.F."/>
            <person name="Lazarevic D."/>
            <person name="Lipovich L."/>
            <person name="Liu J."/>
            <person name="Liuni S."/>
            <person name="McWilliam S."/>
            <person name="Madan Babu M."/>
            <person name="Madera M."/>
            <person name="Marchionni L."/>
            <person name="Matsuda H."/>
            <person name="Matsuzawa S."/>
            <person name="Miki H."/>
            <person name="Mignone F."/>
            <person name="Miyake S."/>
            <person name="Morris K."/>
            <person name="Mottagui-Tabar S."/>
            <person name="Mulder N."/>
            <person name="Nakano N."/>
            <person name="Nakauchi H."/>
            <person name="Ng P."/>
            <person name="Nilsson R."/>
            <person name="Nishiguchi S."/>
            <person name="Nishikawa S."/>
            <person name="Nori F."/>
            <person name="Ohara O."/>
            <person name="Okazaki Y."/>
            <person name="Orlando V."/>
            <person name="Pang K.C."/>
            <person name="Pavan W.J."/>
            <person name="Pavesi G."/>
            <person name="Pesole G."/>
            <person name="Petrovsky N."/>
            <person name="Piazza S."/>
            <person name="Reed J."/>
            <person name="Reid J.F."/>
            <person name="Ring B.Z."/>
            <person name="Ringwald M."/>
            <person name="Rost B."/>
            <person name="Ruan Y."/>
            <person name="Salzberg S.L."/>
            <person name="Sandelin A."/>
            <person name="Schneider C."/>
            <person name="Schoenbach C."/>
            <person name="Sekiguchi K."/>
            <person name="Semple C.A."/>
            <person name="Seno S."/>
            <person name="Sessa L."/>
            <person name="Sheng Y."/>
            <person name="Shibata Y."/>
            <person name="Shimada H."/>
            <person name="Shimada K."/>
            <person name="Silva D."/>
            <person name="Sinclair B."/>
            <person name="Sperling S."/>
            <person name="Stupka E."/>
            <person name="Sugiura K."/>
            <person name="Sultana R."/>
            <person name="Takenaka Y."/>
            <person name="Taki K."/>
            <person name="Tammoja K."/>
            <person name="Tan S.L."/>
            <person name="Tang S."/>
            <person name="Taylor M.S."/>
            <person name="Tegner J."/>
            <person name="Teichmann S.A."/>
            <person name="Ueda H.R."/>
            <person name="van Nimwegen E."/>
            <person name="Verardo R."/>
            <person name="Wei C.L."/>
            <person name="Yagi K."/>
            <person name="Yamanishi H."/>
            <person name="Zabarovsky E."/>
            <person name="Zhu S."/>
            <person name="Zimmer A."/>
            <person name="Hide W."/>
            <person name="Bult C."/>
            <person name="Grimmond S.M."/>
            <person name="Teasdale R.D."/>
            <person name="Liu E.T."/>
            <person name="Brusic V."/>
            <person name="Quackenbush J."/>
            <person name="Wahlestedt C."/>
            <person name="Mattick J.S."/>
            <person name="Hume D.A."/>
            <person name="Kai C."/>
            <person name="Sasaki D."/>
            <person name="Tomaru Y."/>
            <person name="Fukuda S."/>
            <person name="Kanamori-Katayama M."/>
            <person name="Suzuki M."/>
            <person name="Aoki J."/>
            <person name="Arakawa T."/>
            <person name="Iida J."/>
            <person name="Imamura K."/>
            <person name="Itoh M."/>
            <person name="Kato T."/>
            <person name="Kawaji H."/>
            <person name="Kawagashira N."/>
            <person name="Kawashima T."/>
            <person name="Kojima M."/>
            <person name="Kondo S."/>
            <person name="Konno H."/>
            <person name="Nakano K."/>
            <person name="Ninomiya N."/>
            <person name="Nishio T."/>
            <person name="Okada M."/>
            <person name="Plessy C."/>
            <person name="Shibata K."/>
            <person name="Shiraki T."/>
            <person name="Suzuki S."/>
            <person name="Tagami M."/>
            <person name="Waki K."/>
            <person name="Watahiki A."/>
            <person name="Okamura-Oho Y."/>
            <person name="Suzuki H."/>
            <person name="Kawai J."/>
            <person name="Hayashizaki Y."/>
        </authorList>
    </citation>
    <scope>NUCLEOTIDE SEQUENCE [LARGE SCALE MRNA] (ISOFORM 1)</scope>
    <source>
        <strain>C57BL/6J</strain>
        <tissue>Liver</tissue>
    </source>
</reference>
<reference key="2">
    <citation type="journal article" date="2004" name="Genome Res.">
        <title>The status, quality, and expansion of the NIH full-length cDNA project: the Mammalian Gene Collection (MGC).</title>
        <authorList>
            <consortium name="The MGC Project Team"/>
        </authorList>
    </citation>
    <scope>NUCLEOTIDE SEQUENCE [LARGE SCALE MRNA] (ISOFORMS 1 AND 2)</scope>
</reference>
<feature type="chain" id="PRO_0000338613" description="GTP-binding protein 8">
    <location>
        <begin position="1"/>
        <end position="285"/>
    </location>
</feature>
<feature type="domain" description="EngB-type G">
    <location>
        <begin position="110"/>
        <end position="283"/>
    </location>
</feature>
<feature type="binding site" evidence="1">
    <location>
        <begin position="118"/>
        <end position="125"/>
    </location>
    <ligand>
        <name>GTP</name>
        <dbReference type="ChEBI" id="CHEBI:37565"/>
    </ligand>
</feature>
<feature type="binding site" evidence="1">
    <location>
        <position position="125"/>
    </location>
    <ligand>
        <name>Mg(2+)</name>
        <dbReference type="ChEBI" id="CHEBI:18420"/>
    </ligand>
</feature>
<feature type="binding site" evidence="1">
    <location>
        <begin position="147"/>
        <end position="151"/>
    </location>
    <ligand>
        <name>GTP</name>
        <dbReference type="ChEBI" id="CHEBI:37565"/>
    </ligand>
</feature>
<feature type="binding site" evidence="1">
    <location>
        <position position="149"/>
    </location>
    <ligand>
        <name>Mg(2+)</name>
        <dbReference type="ChEBI" id="CHEBI:18420"/>
    </ligand>
</feature>
<feature type="binding site" evidence="1">
    <location>
        <begin position="165"/>
        <end position="168"/>
    </location>
    <ligand>
        <name>GTP</name>
        <dbReference type="ChEBI" id="CHEBI:37565"/>
    </ligand>
</feature>
<feature type="binding site" evidence="1">
    <location>
        <begin position="227"/>
        <end position="230"/>
    </location>
    <ligand>
        <name>GTP</name>
        <dbReference type="ChEBI" id="CHEBI:37565"/>
    </ligand>
</feature>
<feature type="binding site" evidence="1">
    <location>
        <begin position="262"/>
        <end position="264"/>
    </location>
    <ligand>
        <name>GTP</name>
        <dbReference type="ChEBI" id="CHEBI:37565"/>
    </ligand>
</feature>
<feature type="splice variant" id="VSP_034058" description="In isoform 2." evidence="2">
    <location>
        <begin position="47"/>
        <end position="113"/>
    </location>
</feature>
<keyword id="KW-0025">Alternative splicing</keyword>
<keyword id="KW-0342">GTP-binding</keyword>
<keyword id="KW-0460">Magnesium</keyword>
<keyword id="KW-0479">Metal-binding</keyword>
<keyword id="KW-0547">Nucleotide-binding</keyword>
<keyword id="KW-1185">Reference proteome</keyword>
<sequence>MAAARLSHRMGRLLEKAPALGPWTRVYSTSPAFAEVLRLPQKQLTKVVYPLRELGQHLAADSGPGLIEQRLFDPSLEDIGRAESIFEATARNRIEYLSSAVRLDHAPSLQQPEVCFIGRSNVGKSSLIKALFSLAPDVEVRISKKPGHTKKMNFFKVGKHFTLVDMPGYGYRAPEDFVDMVETYLKERNNLKRTFLLVDSVVGITKLDNIAIEMCEEFALPYVMILTKIDKSSKGYLLKQVLQIQKFVNTQTQGCFPQLFPISAVTNSGVHLLKCFIADITGSLK</sequence>
<comment type="cofactor">
    <cofactor evidence="1">
        <name>Mg(2+)</name>
        <dbReference type="ChEBI" id="CHEBI:18420"/>
    </cofactor>
</comment>
<comment type="alternative products">
    <event type="alternative splicing"/>
    <isoform>
        <id>Q9CY28-1</id>
        <name>1</name>
        <sequence type="displayed"/>
    </isoform>
    <isoform>
        <id>Q9CY28-2</id>
        <name>2</name>
        <sequence type="described" ref="VSP_034058"/>
    </isoform>
</comment>
<comment type="similarity">
    <text evidence="3">Belongs to the TRAFAC class TrmE-Era-EngA-EngB-Septin-like GTPase superfamily. EngB GTPase family.</text>
</comment>
<gene>
    <name type="primary">Gtpbp8</name>
</gene>
<dbReference type="EMBL" id="AK010979">
    <property type="protein sequence ID" value="BAB27301.1"/>
    <property type="molecule type" value="mRNA"/>
</dbReference>
<dbReference type="EMBL" id="AK147840">
    <property type="protein sequence ID" value="BAE28175.1"/>
    <property type="molecule type" value="mRNA"/>
</dbReference>
<dbReference type="EMBL" id="BC107216">
    <property type="protein sequence ID" value="AAI07217.1"/>
    <property type="molecule type" value="mRNA"/>
</dbReference>
<dbReference type="EMBL" id="BC107217">
    <property type="protein sequence ID" value="AAI07218.1"/>
    <property type="molecule type" value="mRNA"/>
</dbReference>
<dbReference type="CCDS" id="CCDS28188.1">
    <molecule id="Q9CY28-1"/>
</dbReference>
<dbReference type="CCDS" id="CCDS49855.1">
    <molecule id="Q9CY28-2"/>
</dbReference>
<dbReference type="RefSeq" id="NP_001152801.1">
    <molecule id="Q9CY28-2"/>
    <property type="nucleotide sequence ID" value="NM_001159329.1"/>
</dbReference>
<dbReference type="RefSeq" id="NP_079608.1">
    <molecule id="Q9CY28-1"/>
    <property type="nucleotide sequence ID" value="NM_025332.3"/>
</dbReference>
<dbReference type="SMR" id="Q9CY28"/>
<dbReference type="BioGRID" id="211190">
    <property type="interactions" value="3"/>
</dbReference>
<dbReference type="FunCoup" id="Q9CY28">
    <property type="interactions" value="1697"/>
</dbReference>
<dbReference type="STRING" id="10090.ENSMUSP00000125352"/>
<dbReference type="iPTMnet" id="Q9CY28"/>
<dbReference type="PhosphoSitePlus" id="Q9CY28"/>
<dbReference type="PaxDb" id="10090-ENSMUSP00000125352"/>
<dbReference type="PeptideAtlas" id="Q9CY28"/>
<dbReference type="ProteomicsDB" id="271061">
    <molecule id="Q9CY28-1"/>
</dbReference>
<dbReference type="ProteomicsDB" id="271062">
    <molecule id="Q9CY28-2"/>
</dbReference>
<dbReference type="Pumba" id="Q9CY28"/>
<dbReference type="Antibodypedia" id="52345">
    <property type="antibodies" value="72 antibodies from 16 providers"/>
</dbReference>
<dbReference type="DNASU" id="66067"/>
<dbReference type="Ensembl" id="ENSMUST00000023348.11">
    <molecule id="Q9CY28-2"/>
    <property type="protein sequence ID" value="ENSMUSP00000023348.5"/>
    <property type="gene ID" value="ENSMUSG00000022668.11"/>
</dbReference>
<dbReference type="Ensembl" id="ENSMUST00000162512.8">
    <molecule id="Q9CY28-1"/>
    <property type="protein sequence ID" value="ENSMUSP00000125352.2"/>
    <property type="gene ID" value="ENSMUSG00000022668.11"/>
</dbReference>
<dbReference type="GeneID" id="66067"/>
<dbReference type="KEGG" id="mmu:66067"/>
<dbReference type="UCSC" id="uc007zhq.2">
    <molecule id="Q9CY28-1"/>
    <property type="organism name" value="mouse"/>
</dbReference>
<dbReference type="UCSC" id="uc012agd.1">
    <molecule id="Q9CY28-2"/>
    <property type="organism name" value="mouse"/>
</dbReference>
<dbReference type="AGR" id="MGI:1913317"/>
<dbReference type="CTD" id="29083"/>
<dbReference type="MGI" id="MGI:1913317">
    <property type="gene designation" value="Gtpbp8"/>
</dbReference>
<dbReference type="VEuPathDB" id="HostDB:ENSMUSG00000022668"/>
<dbReference type="eggNOG" id="KOG2486">
    <property type="taxonomic scope" value="Eukaryota"/>
</dbReference>
<dbReference type="GeneTree" id="ENSGT00390000001083"/>
<dbReference type="HOGENOM" id="CLU_033732_5_0_1"/>
<dbReference type="InParanoid" id="Q9CY28"/>
<dbReference type="OMA" id="RMDHAPP"/>
<dbReference type="OrthoDB" id="391988at2759"/>
<dbReference type="PhylomeDB" id="Q9CY28"/>
<dbReference type="TreeFam" id="TF331089"/>
<dbReference type="BioGRID-ORCS" id="66067">
    <property type="hits" value="6 hits in 76 CRISPR screens"/>
</dbReference>
<dbReference type="ChiTaRS" id="Gtpbp8">
    <property type="organism name" value="mouse"/>
</dbReference>
<dbReference type="PRO" id="PR:Q9CY28"/>
<dbReference type="Proteomes" id="UP000000589">
    <property type="component" value="Chromosome 16"/>
</dbReference>
<dbReference type="RNAct" id="Q9CY28">
    <property type="molecule type" value="protein"/>
</dbReference>
<dbReference type="Bgee" id="ENSMUSG00000022668">
    <property type="expression patterns" value="Expressed in right kidney and 213 other cell types or tissues"/>
</dbReference>
<dbReference type="ExpressionAtlas" id="Q9CY28">
    <property type="expression patterns" value="baseline and differential"/>
</dbReference>
<dbReference type="GO" id="GO:0005739">
    <property type="term" value="C:mitochondrion"/>
    <property type="evidence" value="ECO:0007005"/>
    <property type="project" value="MGI"/>
</dbReference>
<dbReference type="GO" id="GO:0005525">
    <property type="term" value="F:GTP binding"/>
    <property type="evidence" value="ECO:0007669"/>
    <property type="project" value="UniProtKB-KW"/>
</dbReference>
<dbReference type="GO" id="GO:0046872">
    <property type="term" value="F:metal ion binding"/>
    <property type="evidence" value="ECO:0007669"/>
    <property type="project" value="UniProtKB-KW"/>
</dbReference>
<dbReference type="CDD" id="cd01876">
    <property type="entry name" value="YihA_EngB"/>
    <property type="match status" value="1"/>
</dbReference>
<dbReference type="FunFam" id="3.40.50.300:FF:000857">
    <property type="entry name" value="GTP-binding protein 8 isoform X1"/>
    <property type="match status" value="1"/>
</dbReference>
<dbReference type="Gene3D" id="3.40.50.300">
    <property type="entry name" value="P-loop containing nucleotide triphosphate hydrolases"/>
    <property type="match status" value="1"/>
</dbReference>
<dbReference type="HAMAP" id="MF_00321">
    <property type="entry name" value="GTPase_EngB"/>
    <property type="match status" value="1"/>
</dbReference>
<dbReference type="InterPro" id="IPR052279">
    <property type="entry name" value="EngB_GTPase"/>
</dbReference>
<dbReference type="InterPro" id="IPR030393">
    <property type="entry name" value="G_ENGB_dom"/>
</dbReference>
<dbReference type="InterPro" id="IPR006073">
    <property type="entry name" value="GTP-bd"/>
</dbReference>
<dbReference type="InterPro" id="IPR019987">
    <property type="entry name" value="GTP-bd_ribosome_bio_YsxC"/>
</dbReference>
<dbReference type="InterPro" id="IPR027417">
    <property type="entry name" value="P-loop_NTPase"/>
</dbReference>
<dbReference type="NCBIfam" id="TIGR03598">
    <property type="entry name" value="GTPase_YsxC"/>
    <property type="match status" value="1"/>
</dbReference>
<dbReference type="PANTHER" id="PTHR46498">
    <property type="entry name" value="GTP-BINDING PROTEIN 8"/>
    <property type="match status" value="1"/>
</dbReference>
<dbReference type="PANTHER" id="PTHR46498:SF1">
    <property type="entry name" value="GTP-BINDING PROTEIN 8"/>
    <property type="match status" value="1"/>
</dbReference>
<dbReference type="Pfam" id="PF01926">
    <property type="entry name" value="MMR_HSR1"/>
    <property type="match status" value="1"/>
</dbReference>
<dbReference type="SUPFAM" id="SSF52540">
    <property type="entry name" value="P-loop containing nucleoside triphosphate hydrolases"/>
    <property type="match status" value="1"/>
</dbReference>
<dbReference type="PROSITE" id="PS51706">
    <property type="entry name" value="G_ENGB"/>
    <property type="match status" value="1"/>
</dbReference>
<accession>Q9CY28</accession>
<accession>Q3KNM0</accession>
<organism>
    <name type="scientific">Mus musculus</name>
    <name type="common">Mouse</name>
    <dbReference type="NCBI Taxonomy" id="10090"/>
    <lineage>
        <taxon>Eukaryota</taxon>
        <taxon>Metazoa</taxon>
        <taxon>Chordata</taxon>
        <taxon>Craniata</taxon>
        <taxon>Vertebrata</taxon>
        <taxon>Euteleostomi</taxon>
        <taxon>Mammalia</taxon>
        <taxon>Eutheria</taxon>
        <taxon>Euarchontoglires</taxon>
        <taxon>Glires</taxon>
        <taxon>Rodentia</taxon>
        <taxon>Myomorpha</taxon>
        <taxon>Muroidea</taxon>
        <taxon>Muridae</taxon>
        <taxon>Murinae</taxon>
        <taxon>Mus</taxon>
        <taxon>Mus</taxon>
    </lineage>
</organism>
<proteinExistence type="evidence at transcript level"/>
<evidence type="ECO:0000250" key="1"/>
<evidence type="ECO:0000303" key="2">
    <source>
    </source>
</evidence>
<evidence type="ECO:0000305" key="3"/>
<protein>
    <recommendedName>
        <fullName>GTP-binding protein 8</fullName>
    </recommendedName>
</protein>
<name>GTPB8_MOUSE</name>